<protein>
    <recommendedName>
        <fullName evidence="1">Integration host factor subunit beta</fullName>
        <shortName evidence="1">IHF-beta</shortName>
    </recommendedName>
</protein>
<feature type="chain" id="PRO_1000060676" description="Integration host factor subunit beta">
    <location>
        <begin position="1"/>
        <end position="103"/>
    </location>
</feature>
<feature type="region of interest" description="Disordered" evidence="2">
    <location>
        <begin position="59"/>
        <end position="82"/>
    </location>
</feature>
<reference key="1">
    <citation type="journal article" date="2005" name="Jpn. Agric. Res. Q.">
        <title>Genome sequence of Xanthomonas oryzae pv. oryzae suggests contribution of large numbers of effector genes and insertion sequences to its race diversity.</title>
        <authorList>
            <person name="Ochiai H."/>
            <person name="Inoue Y."/>
            <person name="Takeya M."/>
            <person name="Sasaki A."/>
            <person name="Kaku H."/>
        </authorList>
    </citation>
    <scope>NUCLEOTIDE SEQUENCE [LARGE SCALE GENOMIC DNA]</scope>
    <source>
        <strain>MAFF 311018</strain>
    </source>
</reference>
<sequence>MTKSELIEILARRQAHLKSDDVDLAVKSLLEMMGQALSDGDRIEIRGFGSFSLHYRPPRLGRNPKTGESVALPGKHVPHFKPGKELRERVSSVVPVDMSDTTD</sequence>
<name>IHFB_XANOM</name>
<evidence type="ECO:0000255" key="1">
    <source>
        <dbReference type="HAMAP-Rule" id="MF_00381"/>
    </source>
</evidence>
<evidence type="ECO:0000256" key="2">
    <source>
        <dbReference type="SAM" id="MobiDB-lite"/>
    </source>
</evidence>
<accession>Q2P3S1</accession>
<proteinExistence type="inferred from homology"/>
<comment type="function">
    <text evidence="1">This protein is one of the two subunits of integration host factor, a specific DNA-binding protein that functions in genetic recombination as well as in transcriptional and translational control.</text>
</comment>
<comment type="subunit">
    <text evidence="1">Heterodimer of an alpha and a beta chain.</text>
</comment>
<comment type="similarity">
    <text evidence="1">Belongs to the bacterial histone-like protein family.</text>
</comment>
<organism>
    <name type="scientific">Xanthomonas oryzae pv. oryzae (strain MAFF 311018)</name>
    <dbReference type="NCBI Taxonomy" id="342109"/>
    <lineage>
        <taxon>Bacteria</taxon>
        <taxon>Pseudomonadati</taxon>
        <taxon>Pseudomonadota</taxon>
        <taxon>Gammaproteobacteria</taxon>
        <taxon>Lysobacterales</taxon>
        <taxon>Lysobacteraceae</taxon>
        <taxon>Xanthomonas</taxon>
    </lineage>
</organism>
<keyword id="KW-0233">DNA recombination</keyword>
<keyword id="KW-0238">DNA-binding</keyword>
<keyword id="KW-0804">Transcription</keyword>
<keyword id="KW-0805">Transcription regulation</keyword>
<keyword id="KW-0810">Translation regulation</keyword>
<gene>
    <name evidence="1" type="primary">ihfB</name>
    <name evidence="1" type="synonym">himD</name>
    <name type="ordered locus">XOO2051</name>
</gene>
<dbReference type="EMBL" id="AP008229">
    <property type="protein sequence ID" value="BAE68806.1"/>
    <property type="molecule type" value="Genomic_DNA"/>
</dbReference>
<dbReference type="RefSeq" id="WP_011408447.1">
    <property type="nucleotide sequence ID" value="NC_007705.1"/>
</dbReference>
<dbReference type="SMR" id="Q2P3S1"/>
<dbReference type="KEGG" id="xom:XOO2051"/>
<dbReference type="HOGENOM" id="CLU_105066_2_0_6"/>
<dbReference type="GO" id="GO:0005694">
    <property type="term" value="C:chromosome"/>
    <property type="evidence" value="ECO:0007669"/>
    <property type="project" value="InterPro"/>
</dbReference>
<dbReference type="GO" id="GO:0005829">
    <property type="term" value="C:cytosol"/>
    <property type="evidence" value="ECO:0007669"/>
    <property type="project" value="TreeGrafter"/>
</dbReference>
<dbReference type="GO" id="GO:0003677">
    <property type="term" value="F:DNA binding"/>
    <property type="evidence" value="ECO:0007669"/>
    <property type="project" value="UniProtKB-UniRule"/>
</dbReference>
<dbReference type="GO" id="GO:0030527">
    <property type="term" value="F:structural constituent of chromatin"/>
    <property type="evidence" value="ECO:0007669"/>
    <property type="project" value="InterPro"/>
</dbReference>
<dbReference type="GO" id="GO:0006310">
    <property type="term" value="P:DNA recombination"/>
    <property type="evidence" value="ECO:0007669"/>
    <property type="project" value="UniProtKB-UniRule"/>
</dbReference>
<dbReference type="GO" id="GO:0006355">
    <property type="term" value="P:regulation of DNA-templated transcription"/>
    <property type="evidence" value="ECO:0007669"/>
    <property type="project" value="UniProtKB-UniRule"/>
</dbReference>
<dbReference type="GO" id="GO:0006417">
    <property type="term" value="P:regulation of translation"/>
    <property type="evidence" value="ECO:0007669"/>
    <property type="project" value="UniProtKB-UniRule"/>
</dbReference>
<dbReference type="CDD" id="cd13836">
    <property type="entry name" value="IHF_B"/>
    <property type="match status" value="1"/>
</dbReference>
<dbReference type="FunFam" id="4.10.520.10:FF:000003">
    <property type="entry name" value="Integration host factor subunit beta"/>
    <property type="match status" value="1"/>
</dbReference>
<dbReference type="Gene3D" id="4.10.520.10">
    <property type="entry name" value="IHF-like DNA-binding proteins"/>
    <property type="match status" value="1"/>
</dbReference>
<dbReference type="HAMAP" id="MF_00381">
    <property type="entry name" value="IHF_beta"/>
    <property type="match status" value="1"/>
</dbReference>
<dbReference type="InterPro" id="IPR000119">
    <property type="entry name" value="Hist_DNA-bd"/>
</dbReference>
<dbReference type="InterPro" id="IPR020816">
    <property type="entry name" value="Histone-like_DNA-bd_CS"/>
</dbReference>
<dbReference type="InterPro" id="IPR010992">
    <property type="entry name" value="IHF-like_DNA-bd_dom_sf"/>
</dbReference>
<dbReference type="InterPro" id="IPR005685">
    <property type="entry name" value="IHF_beta"/>
</dbReference>
<dbReference type="NCBIfam" id="TIGR00988">
    <property type="entry name" value="hip"/>
    <property type="match status" value="1"/>
</dbReference>
<dbReference type="NCBIfam" id="NF001222">
    <property type="entry name" value="PRK00199.1"/>
    <property type="match status" value="1"/>
</dbReference>
<dbReference type="PANTHER" id="PTHR33175">
    <property type="entry name" value="DNA-BINDING PROTEIN HU"/>
    <property type="match status" value="1"/>
</dbReference>
<dbReference type="PANTHER" id="PTHR33175:SF5">
    <property type="entry name" value="INTEGRATION HOST FACTOR SUBUNIT BETA"/>
    <property type="match status" value="1"/>
</dbReference>
<dbReference type="Pfam" id="PF00216">
    <property type="entry name" value="Bac_DNA_binding"/>
    <property type="match status" value="1"/>
</dbReference>
<dbReference type="PRINTS" id="PR01727">
    <property type="entry name" value="DNABINDINGHU"/>
</dbReference>
<dbReference type="SMART" id="SM00411">
    <property type="entry name" value="BHL"/>
    <property type="match status" value="1"/>
</dbReference>
<dbReference type="SUPFAM" id="SSF47729">
    <property type="entry name" value="IHF-like DNA-binding proteins"/>
    <property type="match status" value="1"/>
</dbReference>
<dbReference type="PROSITE" id="PS00045">
    <property type="entry name" value="HISTONE_LIKE"/>
    <property type="match status" value="1"/>
</dbReference>